<keyword id="KW-0002">3D-structure</keyword>
<keyword id="KW-0349">Heme</keyword>
<keyword id="KW-0408">Iron</keyword>
<keyword id="KW-0409">Iron storage</keyword>
<keyword id="KW-0479">Metal-binding</keyword>
<keyword id="KW-0560">Oxidoreductase</keyword>
<comment type="function">
    <text evidence="1">Iron-storage protein, whose ferroxidase center binds Fe(2+), oxidizes it using dioxygen to Fe(3+), and participates in the subsequent Fe(3+) oxide mineral core formation within the central cavity of the BFR protein shell.</text>
</comment>
<comment type="catalytic activity">
    <reaction>
        <text>4 Fe(2+) + O2 + 4 H(+) = 4 Fe(3+) + 2 H2O</text>
        <dbReference type="Rhea" id="RHEA:11148"/>
        <dbReference type="ChEBI" id="CHEBI:15377"/>
        <dbReference type="ChEBI" id="CHEBI:15378"/>
        <dbReference type="ChEBI" id="CHEBI:15379"/>
        <dbReference type="ChEBI" id="CHEBI:29033"/>
        <dbReference type="ChEBI" id="CHEBI:29034"/>
        <dbReference type="EC" id="1.16.3.1"/>
    </reaction>
</comment>
<comment type="catalytic activity">
    <reaction evidence="2">
        <text>Fe(2+)(in) = Fe(2+)(out)</text>
        <dbReference type="Rhea" id="RHEA:28486"/>
        <dbReference type="ChEBI" id="CHEBI:29033"/>
    </reaction>
</comment>
<comment type="cofactor">
    <cofactor>
        <name>heme b</name>
        <dbReference type="ChEBI" id="CHEBI:60344"/>
    </cofactor>
    <text>Binds 1 heme b (iron(II)-protoporphyrin IX) group per dimer.</text>
</comment>
<comment type="subunit">
    <text>Homooligomer of 24 subunits, arranged as 12 dimers, that are packed together to form an approximately spherical molecule with a central cavity, in which large amounts of iron can be deposited.</text>
</comment>
<comment type="similarity">
    <text evidence="4">Belongs to the bacterioferritin family.</text>
</comment>
<dbReference type="EC" id="1.16.3.1"/>
<dbReference type="EMBL" id="Z54247">
    <property type="protein sequence ID" value="CAA91017.1"/>
    <property type="molecule type" value="Genomic_DNA"/>
</dbReference>
<dbReference type="PIR" id="S48182">
    <property type="entry name" value="S48182"/>
</dbReference>
<dbReference type="RefSeq" id="WP_013066657.1">
    <property type="nucleotide sequence ID" value="NZ_VIBE01000011.1"/>
</dbReference>
<dbReference type="PDB" id="1JGC">
    <property type="method" value="X-ray"/>
    <property type="resolution" value="2.60 A"/>
    <property type="chains" value="A/B/C=1-161"/>
</dbReference>
<dbReference type="PDBsum" id="1JGC"/>
<dbReference type="SMR" id="Q59738"/>
<dbReference type="GeneID" id="31489850"/>
<dbReference type="OMA" id="YQRLFHV"/>
<dbReference type="OrthoDB" id="9800505at2"/>
<dbReference type="EvolutionaryTrace" id="Q59738"/>
<dbReference type="GO" id="GO:0005829">
    <property type="term" value="C:cytosol"/>
    <property type="evidence" value="ECO:0007669"/>
    <property type="project" value="TreeGrafter"/>
</dbReference>
<dbReference type="GO" id="GO:0008199">
    <property type="term" value="F:ferric iron binding"/>
    <property type="evidence" value="ECO:0007669"/>
    <property type="project" value="InterPro"/>
</dbReference>
<dbReference type="GO" id="GO:0004322">
    <property type="term" value="F:ferroxidase activity"/>
    <property type="evidence" value="ECO:0007669"/>
    <property type="project" value="UniProtKB-EC"/>
</dbReference>
<dbReference type="GO" id="GO:0020037">
    <property type="term" value="F:heme binding"/>
    <property type="evidence" value="ECO:0007669"/>
    <property type="project" value="TreeGrafter"/>
</dbReference>
<dbReference type="GO" id="GO:0006879">
    <property type="term" value="P:intracellular iron ion homeostasis"/>
    <property type="evidence" value="ECO:0007669"/>
    <property type="project" value="UniProtKB-KW"/>
</dbReference>
<dbReference type="GO" id="GO:0006826">
    <property type="term" value="P:iron ion transport"/>
    <property type="evidence" value="ECO:0007669"/>
    <property type="project" value="InterPro"/>
</dbReference>
<dbReference type="CDD" id="cd00907">
    <property type="entry name" value="Bacterioferritin"/>
    <property type="match status" value="1"/>
</dbReference>
<dbReference type="Gene3D" id="1.20.1260.10">
    <property type="match status" value="1"/>
</dbReference>
<dbReference type="InterPro" id="IPR002024">
    <property type="entry name" value="Bacterioferritin"/>
</dbReference>
<dbReference type="InterPro" id="IPR012347">
    <property type="entry name" value="Ferritin-like"/>
</dbReference>
<dbReference type="InterPro" id="IPR009040">
    <property type="entry name" value="Ferritin-like_diiron"/>
</dbReference>
<dbReference type="InterPro" id="IPR009078">
    <property type="entry name" value="Ferritin-like_SF"/>
</dbReference>
<dbReference type="InterPro" id="IPR008331">
    <property type="entry name" value="Ferritin_DPS_dom"/>
</dbReference>
<dbReference type="NCBIfam" id="TIGR00754">
    <property type="entry name" value="bfr"/>
    <property type="match status" value="1"/>
</dbReference>
<dbReference type="PANTHER" id="PTHR30295">
    <property type="entry name" value="BACTERIOFERRITIN"/>
    <property type="match status" value="1"/>
</dbReference>
<dbReference type="PANTHER" id="PTHR30295:SF0">
    <property type="entry name" value="BACTERIOFERRITIN"/>
    <property type="match status" value="1"/>
</dbReference>
<dbReference type="Pfam" id="PF00210">
    <property type="entry name" value="Ferritin"/>
    <property type="match status" value="1"/>
</dbReference>
<dbReference type="PIRSF" id="PIRSF002560">
    <property type="entry name" value="Bacterioferritin"/>
    <property type="match status" value="1"/>
</dbReference>
<dbReference type="PRINTS" id="PR00601">
    <property type="entry name" value="BACFERRITIN"/>
</dbReference>
<dbReference type="SUPFAM" id="SSF47240">
    <property type="entry name" value="Ferritin-like"/>
    <property type="match status" value="1"/>
</dbReference>
<dbReference type="PROSITE" id="PS00549">
    <property type="entry name" value="BACTERIOFERRITIN"/>
    <property type="match status" value="1"/>
</dbReference>
<dbReference type="PROSITE" id="PS50905">
    <property type="entry name" value="FERRITIN_LIKE"/>
    <property type="match status" value="1"/>
</dbReference>
<sequence>MKGDAKVIEFLNAALRSELTAISQYWVHFRLQEDWGLAKMAKKSREESIEEMGHADKIIARILFLEGHPNLQKLDPLRIGEGPRETLECDLAGEHDALKLYREARDYCAEVGDIVSKNIFESLITDEEGHVDFLETQISLYDRLGPQGFALLNAAPMDAAE</sequence>
<feature type="chain" id="PRO_0000192611" description="Bacterioferritin">
    <location>
        <begin position="1"/>
        <end position="161"/>
    </location>
</feature>
<feature type="domain" description="Ferritin-like diiron" evidence="3">
    <location>
        <begin position="1"/>
        <end position="145"/>
    </location>
</feature>
<feature type="binding site">
    <location>
        <position position="18"/>
    </location>
    <ligand>
        <name>Fe cation</name>
        <dbReference type="ChEBI" id="CHEBI:24875"/>
        <label>1</label>
    </ligand>
</feature>
<feature type="binding site">
    <location>
        <position position="51"/>
    </location>
    <ligand>
        <name>Fe cation</name>
        <dbReference type="ChEBI" id="CHEBI:24875"/>
        <label>1</label>
    </ligand>
</feature>
<feature type="binding site">
    <location>
        <position position="51"/>
    </location>
    <ligand>
        <name>Fe cation</name>
        <dbReference type="ChEBI" id="CHEBI:24875"/>
        <label>2</label>
    </ligand>
</feature>
<feature type="binding site" description="axial binding residue">
    <location>
        <position position="52"/>
    </location>
    <ligand>
        <name>heme b</name>
        <dbReference type="ChEBI" id="CHEBI:60344"/>
        <note>ligand shared between dimeric partners</note>
    </ligand>
    <ligandPart>
        <name>Fe</name>
        <dbReference type="ChEBI" id="CHEBI:18248"/>
    </ligandPart>
</feature>
<feature type="binding site">
    <location>
        <position position="54"/>
    </location>
    <ligand>
        <name>Fe cation</name>
        <dbReference type="ChEBI" id="CHEBI:24875"/>
        <label>1</label>
    </ligand>
</feature>
<feature type="binding site">
    <location>
        <position position="94"/>
    </location>
    <ligand>
        <name>Fe cation</name>
        <dbReference type="ChEBI" id="CHEBI:24875"/>
        <label>2</label>
    </ligand>
</feature>
<feature type="binding site">
    <location>
        <position position="127"/>
    </location>
    <ligand>
        <name>Fe cation</name>
        <dbReference type="ChEBI" id="CHEBI:24875"/>
        <label>1</label>
    </ligand>
</feature>
<feature type="binding site">
    <location>
        <position position="127"/>
    </location>
    <ligand>
        <name>Fe cation</name>
        <dbReference type="ChEBI" id="CHEBI:24875"/>
        <label>2</label>
    </ligand>
</feature>
<feature type="binding site">
    <location>
        <position position="130"/>
    </location>
    <ligand>
        <name>Fe cation</name>
        <dbReference type="ChEBI" id="CHEBI:24875"/>
        <label>2</label>
    </ligand>
</feature>
<feature type="helix" evidence="5">
    <location>
        <begin position="5"/>
        <end position="34"/>
    </location>
</feature>
<feature type="helix" evidence="5">
    <location>
        <begin position="38"/>
        <end position="64"/>
    </location>
</feature>
<feature type="helix" evidence="5">
    <location>
        <begin position="83"/>
        <end position="111"/>
    </location>
</feature>
<feature type="helix" evidence="5">
    <location>
        <begin position="114"/>
        <end position="144"/>
    </location>
</feature>
<feature type="helix" evidence="5">
    <location>
        <begin position="146"/>
        <end position="152"/>
    </location>
</feature>
<protein>
    <recommendedName>
        <fullName>Bacterioferritin</fullName>
        <shortName>BFR</shortName>
        <ecNumber>1.16.3.1</ecNumber>
    </recommendedName>
</protein>
<name>BFR_RHOCA</name>
<reference key="1">
    <citation type="journal article" date="1996" name="FEMS Microbiol. Lett.">
        <title>Isolation, characterisation and expression of the bacterioferritin gene of Rhodobacter capsulatus.</title>
        <authorList>
            <person name="Penfold C.N."/>
            <person name="Ringeling P.L."/>
            <person name="Davy S.L."/>
            <person name="Moore G.R."/>
            <person name="McEwan A.G."/>
            <person name="Spiro S."/>
        </authorList>
    </citation>
    <scope>NUCLEOTIDE SEQUENCE [GENOMIC DNA]</scope>
    <source>
        <strain>DSM 938 / 37b4</strain>
    </source>
</reference>
<reference key="2">
    <citation type="journal article" date="2002" name="Acta Crystallogr. D">
        <title>The 2.6 A resolution structure of Rhodobacter capsulatus bacterioferritin with metal-free dinuclear site and heme iron in a crystallographic 'special position'.</title>
        <authorList>
            <person name="Cobessi D."/>
            <person name="Huang L.-S."/>
            <person name="Ban M."/>
            <person name="Pon N.G."/>
            <person name="Daldal F."/>
            <person name="Berry E.A."/>
        </authorList>
    </citation>
    <scope>X-RAY CRYSTALLOGRAPHY (2.6 ANGSTROMS)</scope>
</reference>
<organism>
    <name type="scientific">Rhodobacter capsulatus</name>
    <name type="common">Rhodopseudomonas capsulata</name>
    <dbReference type="NCBI Taxonomy" id="1061"/>
    <lineage>
        <taxon>Bacteria</taxon>
        <taxon>Pseudomonadati</taxon>
        <taxon>Pseudomonadota</taxon>
        <taxon>Alphaproteobacteria</taxon>
        <taxon>Rhodobacterales</taxon>
        <taxon>Rhodobacter group</taxon>
        <taxon>Rhodobacter</taxon>
    </lineage>
</organism>
<gene>
    <name type="primary">bfr</name>
</gene>
<evidence type="ECO:0000250" key="1"/>
<evidence type="ECO:0000250" key="2">
    <source>
        <dbReference type="UniProtKB" id="Q9HWF9"/>
    </source>
</evidence>
<evidence type="ECO:0000255" key="3">
    <source>
        <dbReference type="PROSITE-ProRule" id="PRU00085"/>
    </source>
</evidence>
<evidence type="ECO:0000305" key="4"/>
<evidence type="ECO:0007829" key="5">
    <source>
        <dbReference type="PDB" id="1JGC"/>
    </source>
</evidence>
<proteinExistence type="evidence at protein level"/>
<accession>Q59738</accession>